<proteinExistence type="inferred from homology"/>
<accession>O51356</accession>
<keyword id="KW-0997">Cell inner membrane</keyword>
<keyword id="KW-1003">Cell membrane</keyword>
<keyword id="KW-0472">Membrane</keyword>
<keyword id="KW-0653">Protein transport</keyword>
<keyword id="KW-1185">Reference proteome</keyword>
<keyword id="KW-0811">Translocation</keyword>
<keyword id="KW-0812">Transmembrane</keyword>
<keyword id="KW-1133">Transmembrane helix</keyword>
<keyword id="KW-0813">Transport</keyword>
<name>SECE_BORBU</name>
<evidence type="ECO:0000255" key="1">
    <source>
        <dbReference type="HAMAP-Rule" id="MF_00422"/>
    </source>
</evidence>
<reference key="1">
    <citation type="journal article" date="1997" name="Nature">
        <title>Genomic sequence of a Lyme disease spirochaete, Borrelia burgdorferi.</title>
        <authorList>
            <person name="Fraser C.M."/>
            <person name="Casjens S."/>
            <person name="Huang W.M."/>
            <person name="Sutton G.G."/>
            <person name="Clayton R.A."/>
            <person name="Lathigra R."/>
            <person name="White O."/>
            <person name="Ketchum K.A."/>
            <person name="Dodson R.J."/>
            <person name="Hickey E.K."/>
            <person name="Gwinn M.L."/>
            <person name="Dougherty B.A."/>
            <person name="Tomb J.-F."/>
            <person name="Fleischmann R.D."/>
            <person name="Richardson D.L."/>
            <person name="Peterson J.D."/>
            <person name="Kerlavage A.R."/>
            <person name="Quackenbush J."/>
            <person name="Salzberg S.L."/>
            <person name="Hanson M."/>
            <person name="van Vugt R."/>
            <person name="Palmer N."/>
            <person name="Adams M.D."/>
            <person name="Gocayne J.D."/>
            <person name="Weidman J.F."/>
            <person name="Utterback T.R."/>
            <person name="Watthey L."/>
            <person name="McDonald L.A."/>
            <person name="Artiach P."/>
            <person name="Bowman C."/>
            <person name="Garland S.A."/>
            <person name="Fujii C."/>
            <person name="Cotton M.D."/>
            <person name="Horst K."/>
            <person name="Roberts K.M."/>
            <person name="Hatch B."/>
            <person name="Smith H.O."/>
            <person name="Venter J.C."/>
        </authorList>
    </citation>
    <scope>NUCLEOTIDE SEQUENCE [LARGE SCALE GENOMIC DNA]</scope>
    <source>
        <strain>ATCC 35210 / DSM 4680 / CIP 102532 / B31</strain>
    </source>
</reference>
<comment type="function">
    <text evidence="1">Essential subunit of the Sec protein translocation channel SecYEG. Clamps together the 2 halves of SecY. May contact the channel plug during translocation.</text>
</comment>
<comment type="subunit">
    <text evidence="1">Component of the Sec protein translocase complex. Heterotrimer consisting of SecY, SecE and SecG subunits. The heterotrimers can form oligomers, although 1 heterotrimer is thought to be able to translocate proteins. Interacts with the ribosome. Interacts with SecDF, and other proteins may be involved. Interacts with SecA.</text>
</comment>
<comment type="subcellular location">
    <subcellularLocation>
        <location evidence="1">Cell inner membrane</location>
        <topology evidence="1">Single-pass membrane protein</topology>
    </subcellularLocation>
</comment>
<comment type="similarity">
    <text evidence="1">Belongs to the SecE/SEC61-gamma family.</text>
</comment>
<gene>
    <name evidence="1" type="primary">secE</name>
    <name type="ordered locus">BB_0395</name>
</gene>
<feature type="chain" id="PRO_0000104159" description="Protein translocase subunit SecE">
    <location>
        <begin position="1"/>
        <end position="56"/>
    </location>
</feature>
<feature type="transmembrane region" description="Helical" evidence="1">
    <location>
        <begin position="30"/>
        <end position="50"/>
    </location>
</feature>
<organism>
    <name type="scientific">Borreliella burgdorferi (strain ATCC 35210 / DSM 4680 / CIP 102532 / B31)</name>
    <name type="common">Borrelia burgdorferi</name>
    <dbReference type="NCBI Taxonomy" id="224326"/>
    <lineage>
        <taxon>Bacteria</taxon>
        <taxon>Pseudomonadati</taxon>
        <taxon>Spirochaetota</taxon>
        <taxon>Spirochaetia</taxon>
        <taxon>Spirochaetales</taxon>
        <taxon>Borreliaceae</taxon>
        <taxon>Borreliella</taxon>
    </lineage>
</organism>
<protein>
    <recommendedName>
        <fullName evidence="1">Protein translocase subunit SecE</fullName>
    </recommendedName>
</protein>
<dbReference type="EMBL" id="AE000783">
    <property type="protein sequence ID" value="AAC66770.1"/>
    <property type="molecule type" value="Genomic_DNA"/>
</dbReference>
<dbReference type="PIR" id="B70149">
    <property type="entry name" value="B70149"/>
</dbReference>
<dbReference type="RefSeq" id="NP_212529.1">
    <property type="nucleotide sequence ID" value="NC_001318.1"/>
</dbReference>
<dbReference type="RefSeq" id="WP_002556990.1">
    <property type="nucleotide sequence ID" value="NC_001318.1"/>
</dbReference>
<dbReference type="SMR" id="O51356"/>
<dbReference type="STRING" id="224326.BB_0395"/>
<dbReference type="PaxDb" id="224326-BB_0395"/>
<dbReference type="EnsemblBacteria" id="AAC66770">
    <property type="protein sequence ID" value="AAC66770"/>
    <property type="gene ID" value="BB_0395"/>
</dbReference>
<dbReference type="GeneID" id="56567823"/>
<dbReference type="KEGG" id="bbu:BB_0395"/>
<dbReference type="HOGENOM" id="CLU_113663_8_0_12"/>
<dbReference type="OrthoDB" id="9813233at2"/>
<dbReference type="Proteomes" id="UP000001807">
    <property type="component" value="Chromosome"/>
</dbReference>
<dbReference type="GO" id="GO:0005886">
    <property type="term" value="C:plasma membrane"/>
    <property type="evidence" value="ECO:0007669"/>
    <property type="project" value="UniProtKB-SubCell"/>
</dbReference>
<dbReference type="GO" id="GO:0008320">
    <property type="term" value="F:protein transmembrane transporter activity"/>
    <property type="evidence" value="ECO:0007669"/>
    <property type="project" value="UniProtKB-UniRule"/>
</dbReference>
<dbReference type="GO" id="GO:0065002">
    <property type="term" value="P:intracellular protein transmembrane transport"/>
    <property type="evidence" value="ECO:0007669"/>
    <property type="project" value="UniProtKB-UniRule"/>
</dbReference>
<dbReference type="GO" id="GO:0009306">
    <property type="term" value="P:protein secretion"/>
    <property type="evidence" value="ECO:0007669"/>
    <property type="project" value="UniProtKB-UniRule"/>
</dbReference>
<dbReference type="GO" id="GO:0006605">
    <property type="term" value="P:protein targeting"/>
    <property type="evidence" value="ECO:0007669"/>
    <property type="project" value="UniProtKB-UniRule"/>
</dbReference>
<dbReference type="GO" id="GO:0043952">
    <property type="term" value="P:protein transport by the Sec complex"/>
    <property type="evidence" value="ECO:0007669"/>
    <property type="project" value="UniProtKB-UniRule"/>
</dbReference>
<dbReference type="Gene3D" id="1.20.5.1030">
    <property type="entry name" value="Preprotein translocase secy subunit"/>
    <property type="match status" value="1"/>
</dbReference>
<dbReference type="HAMAP" id="MF_00422">
    <property type="entry name" value="SecE"/>
    <property type="match status" value="1"/>
</dbReference>
<dbReference type="InterPro" id="IPR005807">
    <property type="entry name" value="SecE_bac"/>
</dbReference>
<dbReference type="InterPro" id="IPR038379">
    <property type="entry name" value="SecE_sf"/>
</dbReference>
<dbReference type="InterPro" id="IPR001901">
    <property type="entry name" value="Translocase_SecE/Sec61-g"/>
</dbReference>
<dbReference type="NCBIfam" id="TIGR00964">
    <property type="entry name" value="secE_bact"/>
    <property type="match status" value="1"/>
</dbReference>
<dbReference type="Pfam" id="PF00584">
    <property type="entry name" value="SecE"/>
    <property type="match status" value="1"/>
</dbReference>
<sequence>MFRFIKDSILELKKVTWPKYNEVVGNGKQVFWLVLFVSIFLGIVDYLMFLVVTYVF</sequence>